<accession>C3K407</accession>
<sequence length="151" mass="16507">MRVWIDADACPRAAKDQVVKFALKRQFEVVLVAGQSQIKPSFSCVKLIVVPSGPDAADDYLVEHAVPGELVICSDVPLADRLVKNGVTALDPRGKEFSPANMSERLAVRNLFTDLREQGQMGGGPPPHGEKEKQAFANALDRILTRLMRQA</sequence>
<protein>
    <recommendedName>
        <fullName evidence="1">UPF0178 protein PFLU_5917</fullName>
    </recommendedName>
</protein>
<gene>
    <name type="ordered locus">PFLU_5917</name>
</gene>
<feature type="chain" id="PRO_1000206458" description="UPF0178 protein PFLU_5917">
    <location>
        <begin position="1"/>
        <end position="151"/>
    </location>
</feature>
<dbReference type="EMBL" id="AM181176">
    <property type="protein sequence ID" value="CAY53397.1"/>
    <property type="molecule type" value="Genomic_DNA"/>
</dbReference>
<dbReference type="RefSeq" id="WP_015886475.1">
    <property type="nucleotide sequence ID" value="NC_012660.1"/>
</dbReference>
<dbReference type="STRING" id="294.SRM1_05609"/>
<dbReference type="PATRIC" id="fig|216595.4.peg.6037"/>
<dbReference type="eggNOG" id="COG1671">
    <property type="taxonomic scope" value="Bacteria"/>
</dbReference>
<dbReference type="HOGENOM" id="CLU_106619_2_1_6"/>
<dbReference type="OrthoDB" id="9798918at2"/>
<dbReference type="CDD" id="cd18720">
    <property type="entry name" value="PIN_YqxD-like"/>
    <property type="match status" value="1"/>
</dbReference>
<dbReference type="HAMAP" id="MF_00489">
    <property type="entry name" value="UPF0178"/>
    <property type="match status" value="1"/>
</dbReference>
<dbReference type="InterPro" id="IPR003791">
    <property type="entry name" value="UPF0178"/>
</dbReference>
<dbReference type="NCBIfam" id="NF001095">
    <property type="entry name" value="PRK00124.1"/>
    <property type="match status" value="1"/>
</dbReference>
<dbReference type="PANTHER" id="PTHR35146">
    <property type="entry name" value="UPF0178 PROTEIN YAII"/>
    <property type="match status" value="1"/>
</dbReference>
<dbReference type="PANTHER" id="PTHR35146:SF1">
    <property type="entry name" value="UPF0178 PROTEIN YAII"/>
    <property type="match status" value="1"/>
</dbReference>
<dbReference type="Pfam" id="PF02639">
    <property type="entry name" value="DUF188"/>
    <property type="match status" value="1"/>
</dbReference>
<organism>
    <name type="scientific">Pseudomonas fluorescens (strain SBW25)</name>
    <dbReference type="NCBI Taxonomy" id="216595"/>
    <lineage>
        <taxon>Bacteria</taxon>
        <taxon>Pseudomonadati</taxon>
        <taxon>Pseudomonadota</taxon>
        <taxon>Gammaproteobacteria</taxon>
        <taxon>Pseudomonadales</taxon>
        <taxon>Pseudomonadaceae</taxon>
        <taxon>Pseudomonas</taxon>
    </lineage>
</organism>
<comment type="similarity">
    <text evidence="1">Belongs to the UPF0178 family.</text>
</comment>
<proteinExistence type="inferred from homology"/>
<name>Y5917_PSEFS</name>
<evidence type="ECO:0000255" key="1">
    <source>
        <dbReference type="HAMAP-Rule" id="MF_00489"/>
    </source>
</evidence>
<reference key="1">
    <citation type="journal article" date="2009" name="Genome Biol.">
        <title>Genomic and genetic analyses of diversity and plant interactions of Pseudomonas fluorescens.</title>
        <authorList>
            <person name="Silby M.W."/>
            <person name="Cerdeno-Tarraga A.M."/>
            <person name="Vernikos G.S."/>
            <person name="Giddens S.R."/>
            <person name="Jackson R.W."/>
            <person name="Preston G.M."/>
            <person name="Zhang X.-X."/>
            <person name="Moon C.D."/>
            <person name="Gehrig S.M."/>
            <person name="Godfrey S.A.C."/>
            <person name="Knight C.G."/>
            <person name="Malone J.G."/>
            <person name="Robinson Z."/>
            <person name="Spiers A.J."/>
            <person name="Harris S."/>
            <person name="Challis G.L."/>
            <person name="Yaxley A.M."/>
            <person name="Harris D."/>
            <person name="Seeger K."/>
            <person name="Murphy L."/>
            <person name="Rutter S."/>
            <person name="Squares R."/>
            <person name="Quail M.A."/>
            <person name="Saunders E."/>
            <person name="Mavromatis K."/>
            <person name="Brettin T.S."/>
            <person name="Bentley S.D."/>
            <person name="Hothersall J."/>
            <person name="Stephens E."/>
            <person name="Thomas C.M."/>
            <person name="Parkhill J."/>
            <person name="Levy S.B."/>
            <person name="Rainey P.B."/>
            <person name="Thomson N.R."/>
        </authorList>
    </citation>
    <scope>NUCLEOTIDE SEQUENCE [LARGE SCALE GENOMIC DNA]</scope>
    <source>
        <strain>SBW25</strain>
    </source>
</reference>